<reference key="1">
    <citation type="journal article" date="1996" name="Biochem. Biophys. Res. Commun.">
        <title>The ribosomal protein gene RPS3 is an essential single copy gene of the yeast Saccharomyces cerevisiae.</title>
        <authorList>
            <person name="Finken-Eigen M."/>
            <person name="Domdey H."/>
            <person name="Koehrer K."/>
        </authorList>
    </citation>
    <scope>NUCLEOTIDE SEQUENCE [GENOMIC DNA]</scope>
    <source>
        <strain>DBY874</strain>
    </source>
</reference>
<reference key="2">
    <citation type="submission" date="1993-11" db="EMBL/GenBank/DDBJ databases">
        <title>Yeast mRNA for ribosomal protein YS3.</title>
        <authorList>
            <person name="Okazaki M."/>
            <person name="Suzuki K."/>
            <person name="Otaka E."/>
        </authorList>
    </citation>
    <scope>NUCLEOTIDE SEQUENCE [GENOMIC RNA]</scope>
    <source>
        <strain>ATCC 204508 / S288c</strain>
    </source>
</reference>
<reference key="3">
    <citation type="submission" date="1994-04" db="EMBL/GenBank/DDBJ databases">
        <title>Molecular cloning and analysis of the RPS3 gene of Saccharomyces cerevisiae.</title>
        <authorList>
            <person name="Burbee D.G."/>
            <person name="Armstrong B.C."/>
        </authorList>
    </citation>
    <scope>NUCLEOTIDE SEQUENCE [GENOMIC DNA]</scope>
    <source>
        <strain>ATCC 204508 / S288c</strain>
    </source>
</reference>
<reference key="4">
    <citation type="journal article" date="1997" name="Nature">
        <title>The nucleotide sequence of Saccharomyces cerevisiae chromosome XIV and its evolutionary implications.</title>
        <authorList>
            <person name="Philippsen P."/>
            <person name="Kleine K."/>
            <person name="Poehlmann R."/>
            <person name="Duesterhoeft A."/>
            <person name="Hamberg K."/>
            <person name="Hegemann J.H."/>
            <person name="Obermaier B."/>
            <person name="Urrestarazu L.A."/>
            <person name="Aert R."/>
            <person name="Albermann K."/>
            <person name="Altmann R."/>
            <person name="Andre B."/>
            <person name="Baladron V."/>
            <person name="Ballesta J.P.G."/>
            <person name="Becam A.-M."/>
            <person name="Beinhauer J.D."/>
            <person name="Boskovic J."/>
            <person name="Buitrago M.J."/>
            <person name="Bussereau F."/>
            <person name="Coster F."/>
            <person name="Crouzet M."/>
            <person name="D'Angelo M."/>
            <person name="Dal Pero F."/>
            <person name="De Antoni A."/>
            <person name="del Rey F."/>
            <person name="Doignon F."/>
            <person name="Domdey H."/>
            <person name="Dubois E."/>
            <person name="Fiedler T.A."/>
            <person name="Fleig U."/>
            <person name="Floeth M."/>
            <person name="Fritz C."/>
            <person name="Gaillardin C."/>
            <person name="Garcia-Cantalejo J.M."/>
            <person name="Glansdorff N."/>
            <person name="Goffeau A."/>
            <person name="Gueldener U."/>
            <person name="Herbert C.J."/>
            <person name="Heumann K."/>
            <person name="Heuss-Neitzel D."/>
            <person name="Hilbert H."/>
            <person name="Hinni K."/>
            <person name="Iraqui Houssaini I."/>
            <person name="Jacquet M."/>
            <person name="Jimenez A."/>
            <person name="Jonniaux J.-L."/>
            <person name="Karpfinger-Hartl L."/>
            <person name="Lanfranchi G."/>
            <person name="Lepingle A."/>
            <person name="Levesque H."/>
            <person name="Lyck R."/>
            <person name="Maftahi M."/>
            <person name="Mallet L."/>
            <person name="Maurer C.T.C."/>
            <person name="Messenguy F."/>
            <person name="Mewes H.-W."/>
            <person name="Moestl D."/>
            <person name="Nasr F."/>
            <person name="Nicaud J.-M."/>
            <person name="Niedenthal R.K."/>
            <person name="Pandolfo D."/>
            <person name="Pierard A."/>
            <person name="Piravandi E."/>
            <person name="Planta R.J."/>
            <person name="Pohl T.M."/>
            <person name="Purnelle B."/>
            <person name="Rebischung C."/>
            <person name="Remacha M.A."/>
            <person name="Revuelta J.L."/>
            <person name="Rinke M."/>
            <person name="Saiz J.E."/>
            <person name="Sartorello F."/>
            <person name="Scherens B."/>
            <person name="Sen-Gupta M."/>
            <person name="Soler-Mira A."/>
            <person name="Urbanus J.H.M."/>
            <person name="Valle G."/>
            <person name="Van Dyck L."/>
            <person name="Verhasselt P."/>
            <person name="Vierendeels F."/>
            <person name="Vissers S."/>
            <person name="Voet M."/>
            <person name="Volckaert G."/>
            <person name="Wach A."/>
            <person name="Wambutt R."/>
            <person name="Wedler H."/>
            <person name="Zollner A."/>
            <person name="Hani J."/>
        </authorList>
    </citation>
    <scope>NUCLEOTIDE SEQUENCE [LARGE SCALE GENOMIC DNA]</scope>
    <source>
        <strain>ATCC 204508 / S288c</strain>
    </source>
</reference>
<reference key="5">
    <citation type="journal article" date="2014" name="G3 (Bethesda)">
        <title>The reference genome sequence of Saccharomyces cerevisiae: Then and now.</title>
        <authorList>
            <person name="Engel S.R."/>
            <person name="Dietrich F.S."/>
            <person name="Fisk D.G."/>
            <person name="Binkley G."/>
            <person name="Balakrishnan R."/>
            <person name="Costanzo M.C."/>
            <person name="Dwight S.S."/>
            <person name="Hitz B.C."/>
            <person name="Karra K."/>
            <person name="Nash R.S."/>
            <person name="Weng S."/>
            <person name="Wong E.D."/>
            <person name="Lloyd P."/>
            <person name="Skrzypek M.S."/>
            <person name="Miyasato S.R."/>
            <person name="Simison M."/>
            <person name="Cherry J.M."/>
        </authorList>
    </citation>
    <scope>GENOME REANNOTATION</scope>
    <source>
        <strain>ATCC 204508 / S288c</strain>
    </source>
</reference>
<reference key="6">
    <citation type="journal article" date="1984" name="Mol. Gen. Genet.">
        <title>Yeast ribosomal proteins. VIII. Isolation of two proteins and sequence characterization of twenty-four proteins from cytoplasmic ribosomes.</title>
        <authorList>
            <person name="Otaka E."/>
            <person name="Higo K."/>
            <person name="Itoh T."/>
        </authorList>
    </citation>
    <scope>PARTIAL PROTEIN SEQUENCE OF 2-21</scope>
    <scope>CLEAVAGE OF INITIATOR METHIONINE</scope>
</reference>
<reference key="7">
    <citation type="journal article" date="1992" name="J. Biol. Chem.">
        <title>NH2-terminal acetylation of ribosomal proteins of Saccharomyces cerevisiae.</title>
        <authorList>
            <person name="Takakura H."/>
            <person name="Tsunasawa S."/>
            <person name="Miyagi M."/>
            <person name="Warner J.R."/>
        </authorList>
    </citation>
    <scope>PROTEIN SEQUENCE OF 2-21</scope>
</reference>
<reference key="8">
    <citation type="journal article" date="1998" name="Yeast">
        <title>The list of cytoplasmic ribosomal proteins of Saccharomyces cerevisiae.</title>
        <authorList>
            <person name="Planta R.J."/>
            <person name="Mager W.H."/>
        </authorList>
    </citation>
    <scope>NOMENCLATURE</scope>
    <scope>SUBUNIT</scope>
</reference>
<reference key="9">
    <citation type="journal article" date="1999" name="J. Biol. Chem.">
        <title>The action of N-terminal acetyltransferases on yeast ribosomal proteins.</title>
        <authorList>
            <person name="Arnold R.J."/>
            <person name="Polevoda B."/>
            <person name="Reilly J.P."/>
            <person name="Sherman F."/>
        </authorList>
    </citation>
    <scope>CLEAVAGE OF INITIATOR METHIONINE</scope>
</reference>
<reference key="10">
    <citation type="journal article" date="2003" name="Nature">
        <title>Global analysis of protein expression in yeast.</title>
        <authorList>
            <person name="Ghaemmaghami S."/>
            <person name="Huh W.-K."/>
            <person name="Bower K."/>
            <person name="Howson R.W."/>
            <person name="Belle A."/>
            <person name="Dephoure N."/>
            <person name="O'Shea E.K."/>
            <person name="Weissman J.S."/>
        </authorList>
    </citation>
    <scope>LEVEL OF PROTEIN EXPRESSION [LARGE SCALE ANALYSIS]</scope>
</reference>
<reference key="11">
    <citation type="journal article" date="2003" name="Nat. Biotechnol.">
        <title>A proteomics approach to understanding protein ubiquitination.</title>
        <authorList>
            <person name="Peng J."/>
            <person name="Schwartz D."/>
            <person name="Elias J.E."/>
            <person name="Thoreen C.C."/>
            <person name="Cheng D."/>
            <person name="Marsischky G."/>
            <person name="Roelofs J."/>
            <person name="Finley D."/>
            <person name="Gygi S.P."/>
        </authorList>
    </citation>
    <scope>UBIQUITINATION [LARGE SCALE ANALYSIS] AT LYS-212</scope>
    <scope>IDENTIFICATION BY MASS SPECTROMETRY</scope>
    <source>
        <strain>SUB592</strain>
    </source>
</reference>
<reference key="12">
    <citation type="journal article" date="2007" name="J. Proteome Res.">
        <title>Large-scale phosphorylation analysis of alpha-factor-arrested Saccharomyces cerevisiae.</title>
        <authorList>
            <person name="Li X."/>
            <person name="Gerber S.A."/>
            <person name="Rudner A.D."/>
            <person name="Beausoleil S.A."/>
            <person name="Haas W."/>
            <person name="Villen J."/>
            <person name="Elias J.E."/>
            <person name="Gygi S.P."/>
        </authorList>
    </citation>
    <scope>PHOSPHORYLATION [LARGE SCALE ANALYSIS] AT SER-221</scope>
    <scope>IDENTIFICATION BY MASS SPECTROMETRY [LARGE SCALE ANALYSIS]</scope>
    <source>
        <strain>ADR376</strain>
    </source>
</reference>
<reference key="13">
    <citation type="journal article" date="2007" name="Proc. Natl. Acad. Sci. U.S.A.">
        <title>Analysis of phosphorylation sites on proteins from Saccharomyces cerevisiae by electron transfer dissociation (ETD) mass spectrometry.</title>
        <authorList>
            <person name="Chi A."/>
            <person name="Huttenhower C."/>
            <person name="Geer L.Y."/>
            <person name="Coon J.J."/>
            <person name="Syka J.E.P."/>
            <person name="Bai D.L."/>
            <person name="Shabanowitz J."/>
            <person name="Burke D.J."/>
            <person name="Troyanskaya O.G."/>
            <person name="Hunt D.F."/>
        </authorList>
    </citation>
    <scope>PHOSPHORYLATION [LARGE SCALE ANALYSIS] AT THR-70; SER-129 AND SER-221</scope>
    <scope>IDENTIFICATION BY MASS SPECTROMETRY [LARGE SCALE ANALYSIS]</scope>
</reference>
<reference key="14">
    <citation type="journal article" date="2008" name="Mol. Cell. Proteomics">
        <title>A multidimensional chromatography technology for in-depth phosphoproteome analysis.</title>
        <authorList>
            <person name="Albuquerque C.P."/>
            <person name="Smolka M.B."/>
            <person name="Payne S.H."/>
            <person name="Bafna V."/>
            <person name="Eng J."/>
            <person name="Zhou H."/>
        </authorList>
    </citation>
    <scope>PHOSPHORYLATION [LARGE SCALE ANALYSIS] AT THR-44; SER-97 AND SER-221</scope>
    <scope>IDENTIFICATION BY MASS SPECTROMETRY [LARGE SCALE ANALYSIS]</scope>
</reference>
<reference key="15">
    <citation type="journal article" date="2009" name="Science">
        <title>Global analysis of Cdk1 substrate phosphorylation sites provides insights into evolution.</title>
        <authorList>
            <person name="Holt L.J."/>
            <person name="Tuch B.B."/>
            <person name="Villen J."/>
            <person name="Johnson A.D."/>
            <person name="Gygi S.P."/>
            <person name="Morgan D.O."/>
        </authorList>
    </citation>
    <scope>PHOSPHORYLATION [LARGE SCALE ANALYSIS] AT SER-221 AND THR-231</scope>
    <scope>IDENTIFICATION BY MASS SPECTROMETRY [LARGE SCALE ANALYSIS]</scope>
</reference>
<reference key="16">
    <citation type="journal article" date="2012" name="Biochemistry">
        <title>Identification of methylated proteins in the yeast small ribosomal subunit: a role for SPOUT methyltransferases in protein arginine methylation.</title>
        <authorList>
            <person name="Young B.D."/>
            <person name="Weiss D.I."/>
            <person name="Zurita-Lopez C.I."/>
            <person name="Webb K.J."/>
            <person name="Clarke S.G."/>
            <person name="McBride A.E."/>
        </authorList>
    </citation>
    <scope>METHYLATION AT ARG-146 BY SFM1</scope>
    <scope>MASS SPECTROMETRY</scope>
</reference>
<reference key="17">
    <citation type="journal article" date="2012" name="Proc. Natl. Acad. Sci. U.S.A.">
        <title>N-terminal acetylome analyses and functional insights of the N-terminal acetyltransferase NatB.</title>
        <authorList>
            <person name="Van Damme P."/>
            <person name="Lasa M."/>
            <person name="Polevoda B."/>
            <person name="Gazquez C."/>
            <person name="Elosegui-Artola A."/>
            <person name="Kim D.S."/>
            <person name="De Juan-Pardo E."/>
            <person name="Demeyer K."/>
            <person name="Hole K."/>
            <person name="Larrea E."/>
            <person name="Timmerman E."/>
            <person name="Prieto J."/>
            <person name="Arnesen T."/>
            <person name="Sherman F."/>
            <person name="Gevaert K."/>
            <person name="Aldabe R."/>
        </authorList>
    </citation>
    <scope>IDENTIFICATION BY MASS SPECTROMETRY [LARGE SCALE ANALYSIS]</scope>
</reference>
<reference key="18">
    <citation type="journal article" date="2012" name="Proteomics">
        <title>Sites of ubiquitin attachment in Saccharomyces cerevisiae.</title>
        <authorList>
            <person name="Starita L.M."/>
            <person name="Lo R.S."/>
            <person name="Eng J.K."/>
            <person name="von Haller P.D."/>
            <person name="Fields S."/>
        </authorList>
    </citation>
    <scope>UBIQUITINATION [LARGE SCALE ANALYSIS] AT LYS-106; LYS-132; LYS-141; LYS-151; LYS-200 AND LYS-212</scope>
    <scope>IDENTIFICATION BY MASS SPECTROMETRY [LARGE SCALE ANALYSIS]</scope>
</reference>
<reference key="19">
    <citation type="journal article" date="2014" name="Curr. Opin. Struct. Biol.">
        <title>A new system for naming ribosomal proteins.</title>
        <authorList>
            <person name="Ban N."/>
            <person name="Beckmann R."/>
            <person name="Cate J.H.D."/>
            <person name="Dinman J.D."/>
            <person name="Dragon F."/>
            <person name="Ellis S.R."/>
            <person name="Lafontaine D.L.J."/>
            <person name="Lindahl L."/>
            <person name="Liljas A."/>
            <person name="Lipton J.M."/>
            <person name="McAlear M.A."/>
            <person name="Moore P.B."/>
            <person name="Noller H.F."/>
            <person name="Ortega J."/>
            <person name="Panse V.G."/>
            <person name="Ramakrishnan V."/>
            <person name="Spahn C.M.T."/>
            <person name="Steitz T.A."/>
            <person name="Tchorzewski M."/>
            <person name="Tollervey D."/>
            <person name="Warren A.J."/>
            <person name="Williamson J.R."/>
            <person name="Wilson D."/>
            <person name="Yonath A."/>
            <person name="Yusupov M."/>
        </authorList>
    </citation>
    <scope>NOMENCLATURE</scope>
</reference>
<reference key="20">
    <citation type="journal article" date="2017" name="Mol. Cell">
        <title>Ribosome collision is critical for quality control during No-Go decay.</title>
        <authorList>
            <person name="Simms C.L."/>
            <person name="Yan L.L."/>
            <person name="Zaher H.S."/>
        </authorList>
    </citation>
    <scope>UBIQUITINATION</scope>
</reference>
<reference key="21">
    <citation type="journal article" date="2017" name="Nat. Commun.">
        <title>Ubiquitination of stalled ribosome triggers ribosome-associated quality control.</title>
        <authorList>
            <person name="Matsuo Y."/>
            <person name="Ikeuchi K."/>
            <person name="Saeki Y."/>
            <person name="Iwasaki S."/>
            <person name="Schmidt C."/>
            <person name="Udagawa T."/>
            <person name="Sato F."/>
            <person name="Tsuchiya H."/>
            <person name="Becker T."/>
            <person name="Tanaka K."/>
            <person name="Ingolia N.T."/>
            <person name="Beckmann R."/>
            <person name="Inada T."/>
        </authorList>
    </citation>
    <scope>UBIQUITINATION AT LYS-212</scope>
    <scope>MUTAGENESIS OF LYS-212</scope>
</reference>
<reference key="22">
    <citation type="journal article" date="2018" name="Elife">
        <title>Multi-protein bridging factor 1(Mbf1), Rps3 and Asc1 prevent stalled ribosomes from frameshifting.</title>
        <authorList>
            <person name="Wang J."/>
            <person name="Zhou J."/>
            <person name="Yang Q."/>
            <person name="Grayhack E.J."/>
        </authorList>
    </citation>
    <scope>MUTAGENESIS OF LYS-108</scope>
</reference>
<reference key="23">
    <citation type="journal article" date="2019" name="Cell Rep.">
        <title>Sequential ubiquitination of ribosomal protein uS3 triggers the degradation of non-functional 18S rRNA.</title>
        <authorList>
            <person name="Sugiyama T."/>
            <person name="Li S."/>
            <person name="Kato M."/>
            <person name="Ikeuchi K."/>
            <person name="Ichimura A."/>
            <person name="Matsuo Y."/>
            <person name="Inada T."/>
        </authorList>
    </citation>
    <scope>UBIQUITINATION AT LYS-212</scope>
</reference>
<reference key="24">
    <citation type="journal article" date="2019" name="Nat. Commun.">
        <title>Molecular interactions between Hel2 and RNA supporting ribosome-associated quality control.</title>
        <authorList>
            <person name="Winz M.L."/>
            <person name="Peil L."/>
            <person name="Turowski T.W."/>
            <person name="Rappsilber J."/>
            <person name="Tollervey D."/>
        </authorList>
    </citation>
    <scope>UBIQUITINATION AT LYS-212</scope>
</reference>
<reference key="25">
    <citation type="journal article" date="2019" name="Nat. Commun.">
        <title>Oxidation and alkylation stresses activate ribosome-quality control.</title>
        <authorList>
            <person name="Yan L.L."/>
            <person name="Simms C.L."/>
            <person name="McLoughlin F."/>
            <person name="Vierstra R.D."/>
            <person name="Zaher H.S."/>
        </authorList>
    </citation>
    <scope>UBIQUITINATION AT LYS-212</scope>
</reference>
<reference key="26">
    <citation type="journal article" date="2001" name="Cell">
        <title>Structure of the 80S ribosome from Saccharomyces cerevisiae -- tRNA-ribosome and subunit-subunit interactions.</title>
        <authorList>
            <person name="Spahn C.M.T."/>
            <person name="Beckmann R."/>
            <person name="Eswar N."/>
            <person name="Penczek P.A."/>
            <person name="Sali A."/>
            <person name="Blobel G."/>
            <person name="Frank J."/>
        </authorList>
    </citation>
    <scope>3D-STRUCTURE MODELING OF 6-193</scope>
    <scope>ELECTRON MICROSCOPY</scope>
</reference>
<reference key="27">
    <citation type="journal article" date="2004" name="EMBO J.">
        <title>Domain movements of elongation factor eEF2 and the eukaryotic 80S ribosome facilitate tRNA translocation.</title>
        <authorList>
            <person name="Spahn C.M.T."/>
            <person name="Gomez-Lorenzo M.G."/>
            <person name="Grassucci R.A."/>
            <person name="Joergensen R."/>
            <person name="Andersen G.R."/>
            <person name="Beckmann R."/>
            <person name="Penczek P.A."/>
            <person name="Ballesta J.P.G."/>
            <person name="Frank J."/>
        </authorList>
    </citation>
    <scope>3D-STRUCTURE MODELING OF 2-193</scope>
    <scope>ELECTRON MICROSCOPY</scope>
</reference>
<reference key="28">
    <citation type="journal article" date="2010" name="Proc. Natl. Acad. Sci. U.S.A.">
        <title>Cryo-EM structure and rRNA model of a translating eukaryotic 80S ribosome at 5.5-A resolution.</title>
        <authorList>
            <person name="Armache J.P."/>
            <person name="Jarasch A."/>
            <person name="Anger A.M."/>
            <person name="Villa E."/>
            <person name="Becker T."/>
            <person name="Bhushan S."/>
            <person name="Jossinet F."/>
            <person name="Habeck M."/>
            <person name="Dindar G."/>
            <person name="Franckenberg S."/>
            <person name="Marquez V."/>
            <person name="Mielke T."/>
            <person name="Thomm M."/>
            <person name="Berninghausen O."/>
            <person name="Beatrix B."/>
            <person name="Soding J."/>
            <person name="Westhof E."/>
            <person name="Wilson D.N."/>
            <person name="Beckmann R."/>
        </authorList>
    </citation>
    <scope>STRUCTURE BY ELECTRON MICROSCOPY</scope>
</reference>
<reference key="29">
    <citation type="journal article" date="2010" name="Science">
        <title>Crystal structure of the eukaryotic ribosome.</title>
        <authorList>
            <person name="Ben-Shem A."/>
            <person name="Jenner L."/>
            <person name="Yusupova G."/>
            <person name="Yusupov M."/>
        </authorList>
    </citation>
    <scope>X-RAY CRYSTALLOGRAPHY (4.00 ANGSTROMS) OF 80S RIBOSOME</scope>
</reference>
<reference key="30">
    <citation type="journal article" date="2011" name="Science">
        <title>The structure of the eukaryotic ribosome at 3.0 A resolution.</title>
        <authorList>
            <person name="Ben-Shem A."/>
            <person name="Garreau de Loubresse N."/>
            <person name="Melnikov S."/>
            <person name="Jenner L."/>
            <person name="Yusupova G."/>
            <person name="Yusupov M."/>
        </authorList>
    </citation>
    <scope>X-RAY CRYSTALLOGRAPHY (3.00 ANGSTROMS) OF 80S RIBOSOME</scope>
    <scope>SUBUNIT</scope>
    <scope>SUBCELLULAR LOCATION</scope>
</reference>
<reference key="31">
    <citation type="journal article" date="2013" name="J. Mol. Biol.">
        <title>Crystal structure of the yeast ribosomal protein rpS3 in complex with its chaperone Yar1.</title>
        <authorList>
            <person name="Holzer S."/>
            <person name="Ban N."/>
            <person name="Klinge S."/>
        </authorList>
    </citation>
    <scope>X-RAY CRYSTALLOGRAPHY (2.84 ANGSTROMS) OF 1-240</scope>
</reference>
<reference key="32">
    <citation type="journal article" date="2013" name="Science">
        <title>Molecular architecture of a eukaryotic translational initiation complex.</title>
        <authorList>
            <person name="Fernandez I.S."/>
            <person name="Bai X.C."/>
            <person name="Hussain T."/>
            <person name="Kelley A.C."/>
            <person name="Lorsch J.R."/>
            <person name="Ramakrishnan V."/>
            <person name="Scheres S.H."/>
        </authorList>
    </citation>
    <scope>STRUCTURE BY ELECTRON MICROSCOPY (4.30 ANGSTROMS) OF 1-240</scope>
</reference>
<organism>
    <name type="scientific">Saccharomyces cerevisiae (strain ATCC 204508 / S288c)</name>
    <name type="common">Baker's yeast</name>
    <dbReference type="NCBI Taxonomy" id="559292"/>
    <lineage>
        <taxon>Eukaryota</taxon>
        <taxon>Fungi</taxon>
        <taxon>Dikarya</taxon>
        <taxon>Ascomycota</taxon>
        <taxon>Saccharomycotina</taxon>
        <taxon>Saccharomycetes</taxon>
        <taxon>Saccharomycetales</taxon>
        <taxon>Saccharomycetaceae</taxon>
        <taxon>Saccharomyces</taxon>
    </lineage>
</organism>
<proteinExistence type="evidence at protein level"/>
<accession>P05750</accession>
<accession>D6W107</accession>
<dbReference type="EMBL" id="U34347">
    <property type="protein sequence ID" value="AAC49380.1"/>
    <property type="molecule type" value="Genomic_DNA"/>
</dbReference>
<dbReference type="EMBL" id="D25285">
    <property type="protein sequence ID" value="BAA04973.1"/>
    <property type="molecule type" value="mRNA"/>
</dbReference>
<dbReference type="EMBL" id="L31405">
    <property type="protein sequence ID" value="AAA35010.1"/>
    <property type="molecule type" value="Genomic_DNA"/>
</dbReference>
<dbReference type="EMBL" id="Z71454">
    <property type="protein sequence ID" value="CAA96070.1"/>
    <property type="molecule type" value="Genomic_DNA"/>
</dbReference>
<dbReference type="EMBL" id="BK006947">
    <property type="protein sequence ID" value="DAA10373.1"/>
    <property type="molecule type" value="Genomic_DNA"/>
</dbReference>
<dbReference type="PIR" id="S48510">
    <property type="entry name" value="S48510"/>
</dbReference>
<dbReference type="RefSeq" id="NP_014221.3">
    <property type="nucleotide sequence ID" value="NM_001183016.3"/>
</dbReference>
<dbReference type="PDB" id="3J6X">
    <property type="method" value="EM"/>
    <property type="resolution" value="6.10 A"/>
    <property type="chains" value="S3=1-240"/>
</dbReference>
<dbReference type="PDB" id="3J6Y">
    <property type="method" value="EM"/>
    <property type="resolution" value="6.10 A"/>
    <property type="chains" value="S3=1-240"/>
</dbReference>
<dbReference type="PDB" id="3J77">
    <property type="method" value="EM"/>
    <property type="resolution" value="6.20 A"/>
    <property type="chains" value="S3=1-240"/>
</dbReference>
<dbReference type="PDB" id="3J78">
    <property type="method" value="EM"/>
    <property type="resolution" value="6.30 A"/>
    <property type="chains" value="S3=1-240"/>
</dbReference>
<dbReference type="PDB" id="4BSZ">
    <property type="method" value="X-ray"/>
    <property type="resolution" value="2.84 A"/>
    <property type="chains" value="A=1-240"/>
</dbReference>
<dbReference type="PDB" id="4U3M">
    <property type="method" value="X-ray"/>
    <property type="resolution" value="3.00 A"/>
    <property type="chains" value="S3/s3=2-240"/>
</dbReference>
<dbReference type="PDB" id="4U3N">
    <property type="method" value="X-ray"/>
    <property type="resolution" value="3.20 A"/>
    <property type="chains" value="S3/s3=2-240"/>
</dbReference>
<dbReference type="PDB" id="4U3U">
    <property type="method" value="X-ray"/>
    <property type="resolution" value="2.90 A"/>
    <property type="chains" value="S3/s3=2-240"/>
</dbReference>
<dbReference type="PDB" id="4U4N">
    <property type="method" value="X-ray"/>
    <property type="resolution" value="3.10 A"/>
    <property type="chains" value="S3/s3=2-240"/>
</dbReference>
<dbReference type="PDB" id="4U4O">
    <property type="method" value="X-ray"/>
    <property type="resolution" value="3.60 A"/>
    <property type="chains" value="S3/s3=2-240"/>
</dbReference>
<dbReference type="PDB" id="4U4Q">
    <property type="method" value="X-ray"/>
    <property type="resolution" value="3.00 A"/>
    <property type="chains" value="S3/s3=2-240"/>
</dbReference>
<dbReference type="PDB" id="4U4R">
    <property type="method" value="X-ray"/>
    <property type="resolution" value="2.80 A"/>
    <property type="chains" value="S3/s3=2-240"/>
</dbReference>
<dbReference type="PDB" id="4U4U">
    <property type="method" value="X-ray"/>
    <property type="resolution" value="3.00 A"/>
    <property type="chains" value="S3/s3=2-240"/>
</dbReference>
<dbReference type="PDB" id="4U4Y">
    <property type="method" value="X-ray"/>
    <property type="resolution" value="3.20 A"/>
    <property type="chains" value="S3/s3=2-240"/>
</dbReference>
<dbReference type="PDB" id="4U4Z">
    <property type="method" value="X-ray"/>
    <property type="resolution" value="3.10 A"/>
    <property type="chains" value="S3/s3=2-240"/>
</dbReference>
<dbReference type="PDB" id="4U50">
    <property type="method" value="X-ray"/>
    <property type="resolution" value="3.20 A"/>
    <property type="chains" value="S3/s3=2-240"/>
</dbReference>
<dbReference type="PDB" id="4U51">
    <property type="method" value="X-ray"/>
    <property type="resolution" value="3.20 A"/>
    <property type="chains" value="S3/s3=2-240"/>
</dbReference>
<dbReference type="PDB" id="4U52">
    <property type="method" value="X-ray"/>
    <property type="resolution" value="3.00 A"/>
    <property type="chains" value="S3/s3=2-240"/>
</dbReference>
<dbReference type="PDB" id="4U53">
    <property type="method" value="X-ray"/>
    <property type="resolution" value="3.30 A"/>
    <property type="chains" value="S3/s3=2-240"/>
</dbReference>
<dbReference type="PDB" id="4U55">
    <property type="method" value="X-ray"/>
    <property type="resolution" value="3.20 A"/>
    <property type="chains" value="S3/s3=2-240"/>
</dbReference>
<dbReference type="PDB" id="4U56">
    <property type="method" value="X-ray"/>
    <property type="resolution" value="3.45 A"/>
    <property type="chains" value="S3/s3=2-240"/>
</dbReference>
<dbReference type="PDB" id="4U6F">
    <property type="method" value="X-ray"/>
    <property type="resolution" value="3.10 A"/>
    <property type="chains" value="S3/s3=2-240"/>
</dbReference>
<dbReference type="PDB" id="4V4B">
    <property type="method" value="EM"/>
    <property type="resolution" value="11.70 A"/>
    <property type="chains" value="AC=2-193"/>
</dbReference>
<dbReference type="PDB" id="4V5Z">
    <property type="method" value="EM"/>
    <property type="resolution" value="8.70 A"/>
    <property type="chains" value="Ac=1-238"/>
</dbReference>
<dbReference type="PDB" id="4V6I">
    <property type="method" value="EM"/>
    <property type="resolution" value="8.80 A"/>
    <property type="chains" value="AB=1-240"/>
</dbReference>
<dbReference type="PDB" id="4V7R">
    <property type="method" value="X-ray"/>
    <property type="resolution" value="4.00 A"/>
    <property type="chains" value="AC/CC=1-240"/>
</dbReference>
<dbReference type="PDB" id="4V88">
    <property type="method" value="X-ray"/>
    <property type="resolution" value="3.00 A"/>
    <property type="chains" value="AD/CD=1-240"/>
</dbReference>
<dbReference type="PDB" id="4V8Y">
    <property type="method" value="EM"/>
    <property type="resolution" value="4.30 A"/>
    <property type="chains" value="AD=1-240"/>
</dbReference>
<dbReference type="PDB" id="4V8Z">
    <property type="method" value="EM"/>
    <property type="resolution" value="6.60 A"/>
    <property type="chains" value="AD=1-240"/>
</dbReference>
<dbReference type="PDB" id="4V92">
    <property type="method" value="EM"/>
    <property type="resolution" value="3.70 A"/>
    <property type="chains" value="D=4-225"/>
</dbReference>
<dbReference type="PDB" id="5DAT">
    <property type="method" value="X-ray"/>
    <property type="resolution" value="3.15 A"/>
    <property type="chains" value="S3/s3=2-240"/>
</dbReference>
<dbReference type="PDB" id="5DC3">
    <property type="method" value="X-ray"/>
    <property type="resolution" value="3.25 A"/>
    <property type="chains" value="S3/s3=2-240"/>
</dbReference>
<dbReference type="PDB" id="5DGE">
    <property type="method" value="X-ray"/>
    <property type="resolution" value="3.45 A"/>
    <property type="chains" value="S3/s3=2-240"/>
</dbReference>
<dbReference type="PDB" id="5DGF">
    <property type="method" value="X-ray"/>
    <property type="resolution" value="3.30 A"/>
    <property type="chains" value="S3/s3=2-240"/>
</dbReference>
<dbReference type="PDB" id="5DGV">
    <property type="method" value="X-ray"/>
    <property type="resolution" value="3.10 A"/>
    <property type="chains" value="S3/s3=2-240"/>
</dbReference>
<dbReference type="PDB" id="5FCI">
    <property type="method" value="X-ray"/>
    <property type="resolution" value="3.40 A"/>
    <property type="chains" value="S3/s3=2-240"/>
</dbReference>
<dbReference type="PDB" id="5FCJ">
    <property type="method" value="X-ray"/>
    <property type="resolution" value="3.10 A"/>
    <property type="chains" value="S3/s3=2-240"/>
</dbReference>
<dbReference type="PDB" id="5I4L">
    <property type="method" value="X-ray"/>
    <property type="resolution" value="3.10 A"/>
    <property type="chains" value="S3/s3=3-225"/>
</dbReference>
<dbReference type="PDB" id="5JUO">
    <property type="method" value="EM"/>
    <property type="resolution" value="4.00 A"/>
    <property type="chains" value="AB=1-240"/>
</dbReference>
<dbReference type="PDB" id="5JUP">
    <property type="method" value="EM"/>
    <property type="resolution" value="3.50 A"/>
    <property type="chains" value="AB=1-240"/>
</dbReference>
<dbReference type="PDB" id="5JUS">
    <property type="method" value="EM"/>
    <property type="resolution" value="4.20 A"/>
    <property type="chains" value="AB=1-240"/>
</dbReference>
<dbReference type="PDB" id="5JUT">
    <property type="method" value="EM"/>
    <property type="resolution" value="4.00 A"/>
    <property type="chains" value="AB=1-240"/>
</dbReference>
<dbReference type="PDB" id="5JUU">
    <property type="method" value="EM"/>
    <property type="resolution" value="4.00 A"/>
    <property type="chains" value="AB=1-240"/>
</dbReference>
<dbReference type="PDB" id="5LYB">
    <property type="method" value="X-ray"/>
    <property type="resolution" value="3.25 A"/>
    <property type="chains" value="S3/s3=3-225"/>
</dbReference>
<dbReference type="PDB" id="5M1J">
    <property type="method" value="EM"/>
    <property type="resolution" value="3.30 A"/>
    <property type="chains" value="D2=3-225"/>
</dbReference>
<dbReference type="PDB" id="5MC6">
    <property type="method" value="EM"/>
    <property type="resolution" value="3.80 A"/>
    <property type="chains" value="A=1-240"/>
</dbReference>
<dbReference type="PDB" id="5MEI">
    <property type="method" value="X-ray"/>
    <property type="resolution" value="3.50 A"/>
    <property type="chains" value="E/s3=3-225"/>
</dbReference>
<dbReference type="PDB" id="5NDG">
    <property type="method" value="X-ray"/>
    <property type="resolution" value="3.70 A"/>
    <property type="chains" value="S3/s3=3-225"/>
</dbReference>
<dbReference type="PDB" id="5NDV">
    <property type="method" value="X-ray"/>
    <property type="resolution" value="3.30 A"/>
    <property type="chains" value="S3/s3=3-225"/>
</dbReference>
<dbReference type="PDB" id="5NDW">
    <property type="method" value="X-ray"/>
    <property type="resolution" value="3.70 A"/>
    <property type="chains" value="S3/s3=3-225"/>
</dbReference>
<dbReference type="PDB" id="5OBM">
    <property type="method" value="X-ray"/>
    <property type="resolution" value="3.40 A"/>
    <property type="chains" value="S3/s3=3-225"/>
</dbReference>
<dbReference type="PDB" id="5ON6">
    <property type="method" value="X-ray"/>
    <property type="resolution" value="3.10 A"/>
    <property type="chains" value="E/s3=3-225"/>
</dbReference>
<dbReference type="PDB" id="5TBW">
    <property type="method" value="X-ray"/>
    <property type="resolution" value="3.00 A"/>
    <property type="chains" value="E/s3=3-225"/>
</dbReference>
<dbReference type="PDB" id="5TGA">
    <property type="method" value="X-ray"/>
    <property type="resolution" value="3.30 A"/>
    <property type="chains" value="S3/s3=3-225"/>
</dbReference>
<dbReference type="PDB" id="5TGM">
    <property type="method" value="X-ray"/>
    <property type="resolution" value="3.50 A"/>
    <property type="chains" value="S3/s3=3-225"/>
</dbReference>
<dbReference type="PDB" id="6FAI">
    <property type="method" value="EM"/>
    <property type="resolution" value="3.40 A"/>
    <property type="chains" value="D=1-240"/>
</dbReference>
<dbReference type="PDB" id="6GQ1">
    <property type="method" value="EM"/>
    <property type="resolution" value="4.40 A"/>
    <property type="chains" value="t=3-225"/>
</dbReference>
<dbReference type="PDB" id="6GQB">
    <property type="method" value="EM"/>
    <property type="resolution" value="3.90 A"/>
    <property type="chains" value="t=3-225"/>
</dbReference>
<dbReference type="PDB" id="6GQV">
    <property type="method" value="EM"/>
    <property type="resolution" value="4.00 A"/>
    <property type="chains" value="t=3-225"/>
</dbReference>
<dbReference type="PDB" id="6HHQ">
    <property type="method" value="X-ray"/>
    <property type="resolution" value="3.10 A"/>
    <property type="chains" value="E/s3=1-240"/>
</dbReference>
<dbReference type="PDB" id="6I7O">
    <property type="method" value="EM"/>
    <property type="resolution" value="5.30 A"/>
    <property type="chains" value="A/Ab=3-225"/>
</dbReference>
<dbReference type="PDB" id="6Q8Y">
    <property type="method" value="EM"/>
    <property type="resolution" value="3.10 A"/>
    <property type="chains" value="A=3-225"/>
</dbReference>
<dbReference type="PDB" id="6RBD">
    <property type="method" value="EM"/>
    <property type="resolution" value="3.47 A"/>
    <property type="chains" value="D=1-240"/>
</dbReference>
<dbReference type="PDB" id="6RBE">
    <property type="method" value="EM"/>
    <property type="resolution" value="3.80 A"/>
    <property type="chains" value="D=1-240"/>
</dbReference>
<dbReference type="PDB" id="6S47">
    <property type="method" value="EM"/>
    <property type="resolution" value="3.28 A"/>
    <property type="chains" value="BE=2-240"/>
</dbReference>
<dbReference type="PDB" id="6SNT">
    <property type="method" value="EM"/>
    <property type="resolution" value="2.80 A"/>
    <property type="chains" value="D=1-240"/>
</dbReference>
<dbReference type="PDB" id="6SV4">
    <property type="method" value="EM"/>
    <property type="resolution" value="3.30 A"/>
    <property type="chains" value="A/Ab/Ac=1-240"/>
</dbReference>
<dbReference type="PDB" id="6T4Q">
    <property type="method" value="EM"/>
    <property type="resolution" value="2.60 A"/>
    <property type="chains" value="SD=4-225"/>
</dbReference>
<dbReference type="PDB" id="6T7I">
    <property type="method" value="EM"/>
    <property type="resolution" value="3.20 A"/>
    <property type="chains" value="SD=1-240"/>
</dbReference>
<dbReference type="PDB" id="6T7T">
    <property type="method" value="EM"/>
    <property type="resolution" value="3.10 A"/>
    <property type="chains" value="SD=1-240"/>
</dbReference>
<dbReference type="PDB" id="6T83">
    <property type="method" value="EM"/>
    <property type="resolution" value="4.00 A"/>
    <property type="chains" value="Db/e=1-240"/>
</dbReference>
<dbReference type="PDB" id="6TB3">
    <property type="method" value="EM"/>
    <property type="resolution" value="2.80 A"/>
    <property type="chains" value="A=4-225"/>
</dbReference>
<dbReference type="PDB" id="6TNU">
    <property type="method" value="EM"/>
    <property type="resolution" value="3.10 A"/>
    <property type="chains" value="A=4-225"/>
</dbReference>
<dbReference type="PDB" id="6WDR">
    <property type="method" value="EM"/>
    <property type="resolution" value="3.70 A"/>
    <property type="chains" value="D=3-225"/>
</dbReference>
<dbReference type="PDB" id="6WOO">
    <property type="method" value="EM"/>
    <property type="resolution" value="2.90 A"/>
    <property type="chains" value="DD=3-225"/>
</dbReference>
<dbReference type="PDB" id="6Z6J">
    <property type="method" value="EM"/>
    <property type="resolution" value="3.40 A"/>
    <property type="chains" value="SD=1-240"/>
</dbReference>
<dbReference type="PDB" id="6Z6K">
    <property type="method" value="EM"/>
    <property type="resolution" value="3.40 A"/>
    <property type="chains" value="SD=1-240"/>
</dbReference>
<dbReference type="PDB" id="6ZCE">
    <property type="method" value="EM"/>
    <property type="resolution" value="5.30 A"/>
    <property type="chains" value="E=1-240"/>
</dbReference>
<dbReference type="PDB" id="6ZU9">
    <property type="method" value="EM"/>
    <property type="resolution" value="6.20 A"/>
    <property type="chains" value="B=1-240"/>
</dbReference>
<dbReference type="PDB" id="6ZVI">
    <property type="method" value="EM"/>
    <property type="resolution" value="3.00 A"/>
    <property type="chains" value="l=3-225"/>
</dbReference>
<dbReference type="PDB" id="7A1G">
    <property type="method" value="EM"/>
    <property type="resolution" value="3.00 A"/>
    <property type="chains" value="A=4-225"/>
</dbReference>
<dbReference type="PDB" id="7B7D">
    <property type="method" value="EM"/>
    <property type="resolution" value="3.30 A"/>
    <property type="chains" value="A=4-225"/>
</dbReference>
<dbReference type="PDB" id="7MPI">
    <property type="method" value="EM"/>
    <property type="resolution" value="3.05 A"/>
    <property type="chains" value="BD=3-225"/>
</dbReference>
<dbReference type="PDB" id="7MPJ">
    <property type="method" value="EM"/>
    <property type="resolution" value="2.70 A"/>
    <property type="chains" value="BD=3-225"/>
</dbReference>
<dbReference type="PDB" id="7N8B">
    <property type="method" value="EM"/>
    <property type="resolution" value="3.05 A"/>
    <property type="chains" value="BD=3-225"/>
</dbReference>
<dbReference type="PDB" id="7NRC">
    <property type="method" value="EM"/>
    <property type="resolution" value="3.90 A"/>
    <property type="chains" value="SA=4-225"/>
</dbReference>
<dbReference type="PDB" id="7NRD">
    <property type="method" value="EM"/>
    <property type="resolution" value="4.36 A"/>
    <property type="chains" value="SA=3-225"/>
</dbReference>
<dbReference type="PDB" id="7ZPQ">
    <property type="method" value="EM"/>
    <property type="resolution" value="3.47 A"/>
    <property type="chains" value="AD=4-225"/>
</dbReference>
<dbReference type="PDB" id="7ZRS">
    <property type="method" value="EM"/>
    <property type="resolution" value="4.80 A"/>
    <property type="chains" value="AD=4-225"/>
</dbReference>
<dbReference type="PDB" id="7ZUW">
    <property type="method" value="EM"/>
    <property type="resolution" value="4.30 A"/>
    <property type="chains" value="AD=4-225"/>
</dbReference>
<dbReference type="PDB" id="7ZUX">
    <property type="method" value="EM"/>
    <property type="resolution" value="2.50 A"/>
    <property type="chains" value="DD=4-225"/>
</dbReference>
<dbReference type="PDB" id="7ZW0">
    <property type="method" value="EM"/>
    <property type="resolution" value="2.40 A"/>
    <property type="chains" value="sA=1-240"/>
</dbReference>
<dbReference type="PDB" id="8BN3">
    <property type="method" value="EM"/>
    <property type="resolution" value="2.40 A"/>
    <property type="chains" value="S3=3-225"/>
</dbReference>
<dbReference type="PDB" id="8BQD">
    <property type="method" value="EM"/>
    <property type="resolution" value="3.90 A"/>
    <property type="chains" value="A=4-225"/>
</dbReference>
<dbReference type="PDB" id="8BQX">
    <property type="method" value="EM"/>
    <property type="resolution" value="3.80 A"/>
    <property type="chains" value="A=4-225"/>
</dbReference>
<dbReference type="PDB" id="8CAH">
    <property type="method" value="EM"/>
    <property type="resolution" value="3.00 A"/>
    <property type="chains" value="A=1-240"/>
</dbReference>
<dbReference type="PDB" id="8CAS">
    <property type="method" value="EM"/>
    <property type="resolution" value="3.30 A"/>
    <property type="chains" value="B=1-240"/>
</dbReference>
<dbReference type="PDB" id="8CBJ">
    <property type="method" value="EM"/>
    <property type="resolution" value="3.80 A"/>
    <property type="chains" value="D=1-240"/>
</dbReference>
<dbReference type="PDB" id="8CCS">
    <property type="method" value="EM"/>
    <property type="resolution" value="1.97 A"/>
    <property type="chains" value="g=1-240"/>
</dbReference>
<dbReference type="PDB" id="8CDL">
    <property type="method" value="EM"/>
    <property type="resolution" value="2.72 A"/>
    <property type="chains" value="g=1-240"/>
</dbReference>
<dbReference type="PDB" id="8CDR">
    <property type="method" value="EM"/>
    <property type="resolution" value="2.04 A"/>
    <property type="chains" value="g=1-240"/>
</dbReference>
<dbReference type="PDB" id="8K2D">
    <property type="method" value="EM"/>
    <property type="resolution" value="3.20 A"/>
    <property type="chains" value="SD=1-240"/>
</dbReference>
<dbReference type="PDB" id="8K82">
    <property type="method" value="EM"/>
    <property type="resolution" value="3.00 A"/>
    <property type="chains" value="SD=1-240"/>
</dbReference>
<dbReference type="PDB" id="8P4V">
    <property type="method" value="X-ray"/>
    <property type="resolution" value="3.16 A"/>
    <property type="chains" value="E/s3=1-240"/>
</dbReference>
<dbReference type="PDB" id="8P9A">
    <property type="method" value="X-ray"/>
    <property type="resolution" value="2.90 A"/>
    <property type="chains" value="E/s3=1-240"/>
</dbReference>
<dbReference type="PDB" id="8T2X">
    <property type="method" value="EM"/>
    <property type="resolution" value="2.46 A"/>
    <property type="chains" value="BD=1-240"/>
</dbReference>
<dbReference type="PDB" id="8T2Y">
    <property type="method" value="EM"/>
    <property type="resolution" value="2.20 A"/>
    <property type="chains" value="BD=1-240"/>
</dbReference>
<dbReference type="PDB" id="8T2Z">
    <property type="method" value="EM"/>
    <property type="resolution" value="2.40 A"/>
    <property type="chains" value="BD=1-240"/>
</dbReference>
<dbReference type="PDB" id="8T30">
    <property type="method" value="EM"/>
    <property type="resolution" value="2.88 A"/>
    <property type="chains" value="BD=1-240"/>
</dbReference>
<dbReference type="PDB" id="8T3A">
    <property type="method" value="EM"/>
    <property type="resolution" value="2.86 A"/>
    <property type="chains" value="BD=1-240"/>
</dbReference>
<dbReference type="PDB" id="8T3B">
    <property type="method" value="EM"/>
    <property type="resolution" value="3.08 A"/>
    <property type="chains" value="BD=1-240"/>
</dbReference>
<dbReference type="PDB" id="8T3C">
    <property type="method" value="EM"/>
    <property type="resolution" value="3.86 A"/>
    <property type="chains" value="BD=1-240"/>
</dbReference>
<dbReference type="PDB" id="8T3D">
    <property type="method" value="EM"/>
    <property type="resolution" value="2.95 A"/>
    <property type="chains" value="BD=1-240"/>
</dbReference>
<dbReference type="PDB" id="8T3E">
    <property type="method" value="EM"/>
    <property type="resolution" value="3.04 A"/>
    <property type="chains" value="BD=1-240"/>
</dbReference>
<dbReference type="PDB" id="8T3F">
    <property type="method" value="EM"/>
    <property type="resolution" value="3.09 A"/>
    <property type="chains" value="BD=1-240"/>
</dbReference>
<dbReference type="PDB" id="8UT0">
    <property type="method" value="EM"/>
    <property type="resolution" value="3.22 A"/>
    <property type="chains" value="SA=4-225"/>
</dbReference>
<dbReference type="PDB" id="8UTI">
    <property type="method" value="EM"/>
    <property type="resolution" value="3.13 A"/>
    <property type="chains" value="SA=4-225"/>
</dbReference>
<dbReference type="PDB" id="8XU8">
    <property type="method" value="EM"/>
    <property type="resolution" value="3.40 A"/>
    <property type="chains" value="SA=4-225"/>
</dbReference>
<dbReference type="PDB" id="8YLD">
    <property type="method" value="EM"/>
    <property type="resolution" value="3.90 A"/>
    <property type="chains" value="SA=4-225"/>
</dbReference>
<dbReference type="PDB" id="8YLR">
    <property type="method" value="EM"/>
    <property type="resolution" value="3.90 A"/>
    <property type="chains" value="SA=4-225"/>
</dbReference>
<dbReference type="PDB" id="8Z70">
    <property type="method" value="EM"/>
    <property type="resolution" value="3.20 A"/>
    <property type="chains" value="SA=4-225"/>
</dbReference>
<dbReference type="PDB" id="8Z71">
    <property type="method" value="EM"/>
    <property type="resolution" value="3.60 A"/>
    <property type="chains" value="SA=4-225"/>
</dbReference>
<dbReference type="PDB" id="9F9S">
    <property type="method" value="EM"/>
    <property type="resolution" value="2.90 A"/>
    <property type="chains" value="Rd/Sd=1-240"/>
</dbReference>
<dbReference type="PDBsum" id="3J6X"/>
<dbReference type="PDBsum" id="3J6Y"/>
<dbReference type="PDBsum" id="3J77"/>
<dbReference type="PDBsum" id="3J78"/>
<dbReference type="PDBsum" id="4BSZ"/>
<dbReference type="PDBsum" id="4U3M"/>
<dbReference type="PDBsum" id="4U3N"/>
<dbReference type="PDBsum" id="4U3U"/>
<dbReference type="PDBsum" id="4U4N"/>
<dbReference type="PDBsum" id="4U4O"/>
<dbReference type="PDBsum" id="4U4Q"/>
<dbReference type="PDBsum" id="4U4R"/>
<dbReference type="PDBsum" id="4U4U"/>
<dbReference type="PDBsum" id="4U4Y"/>
<dbReference type="PDBsum" id="4U4Z"/>
<dbReference type="PDBsum" id="4U50"/>
<dbReference type="PDBsum" id="4U51"/>
<dbReference type="PDBsum" id="4U52"/>
<dbReference type="PDBsum" id="4U53"/>
<dbReference type="PDBsum" id="4U55"/>
<dbReference type="PDBsum" id="4U56"/>
<dbReference type="PDBsum" id="4U6F"/>
<dbReference type="PDBsum" id="4V4B"/>
<dbReference type="PDBsum" id="4V5Z"/>
<dbReference type="PDBsum" id="4V6I"/>
<dbReference type="PDBsum" id="4V7R"/>
<dbReference type="PDBsum" id="4V88"/>
<dbReference type="PDBsum" id="4V8Y"/>
<dbReference type="PDBsum" id="4V8Z"/>
<dbReference type="PDBsum" id="4V92"/>
<dbReference type="PDBsum" id="5DAT"/>
<dbReference type="PDBsum" id="5DC3"/>
<dbReference type="PDBsum" id="5DGE"/>
<dbReference type="PDBsum" id="5DGF"/>
<dbReference type="PDBsum" id="5DGV"/>
<dbReference type="PDBsum" id="5FCI"/>
<dbReference type="PDBsum" id="5FCJ"/>
<dbReference type="PDBsum" id="5I4L"/>
<dbReference type="PDBsum" id="5JUO"/>
<dbReference type="PDBsum" id="5JUP"/>
<dbReference type="PDBsum" id="5JUS"/>
<dbReference type="PDBsum" id="5JUT"/>
<dbReference type="PDBsum" id="5JUU"/>
<dbReference type="PDBsum" id="5LYB"/>
<dbReference type="PDBsum" id="5M1J"/>
<dbReference type="PDBsum" id="5MC6"/>
<dbReference type="PDBsum" id="5MEI"/>
<dbReference type="PDBsum" id="5NDG"/>
<dbReference type="PDBsum" id="5NDV"/>
<dbReference type="PDBsum" id="5NDW"/>
<dbReference type="PDBsum" id="5OBM"/>
<dbReference type="PDBsum" id="5ON6"/>
<dbReference type="PDBsum" id="5TBW"/>
<dbReference type="PDBsum" id="5TGA"/>
<dbReference type="PDBsum" id="5TGM"/>
<dbReference type="PDBsum" id="6FAI"/>
<dbReference type="PDBsum" id="6GQ1"/>
<dbReference type="PDBsum" id="6GQB"/>
<dbReference type="PDBsum" id="6GQV"/>
<dbReference type="PDBsum" id="6HHQ"/>
<dbReference type="PDBsum" id="6I7O"/>
<dbReference type="PDBsum" id="6Q8Y"/>
<dbReference type="PDBsum" id="6RBD"/>
<dbReference type="PDBsum" id="6RBE"/>
<dbReference type="PDBsum" id="6S47"/>
<dbReference type="PDBsum" id="6SNT"/>
<dbReference type="PDBsum" id="6SV4"/>
<dbReference type="PDBsum" id="6T4Q"/>
<dbReference type="PDBsum" id="6T7I"/>
<dbReference type="PDBsum" id="6T7T"/>
<dbReference type="PDBsum" id="6T83"/>
<dbReference type="PDBsum" id="6TB3"/>
<dbReference type="PDBsum" id="6TNU"/>
<dbReference type="PDBsum" id="6WDR"/>
<dbReference type="PDBsum" id="6WOO"/>
<dbReference type="PDBsum" id="6Z6J"/>
<dbReference type="PDBsum" id="6Z6K"/>
<dbReference type="PDBsum" id="6ZCE"/>
<dbReference type="PDBsum" id="6ZU9"/>
<dbReference type="PDBsum" id="6ZVI"/>
<dbReference type="PDBsum" id="7A1G"/>
<dbReference type="PDBsum" id="7B7D"/>
<dbReference type="PDBsum" id="7MPI"/>
<dbReference type="PDBsum" id="7MPJ"/>
<dbReference type="PDBsum" id="7N8B"/>
<dbReference type="PDBsum" id="7NRC"/>
<dbReference type="PDBsum" id="7NRD"/>
<dbReference type="PDBsum" id="7ZPQ"/>
<dbReference type="PDBsum" id="7ZRS"/>
<dbReference type="PDBsum" id="7ZUW"/>
<dbReference type="PDBsum" id="7ZUX"/>
<dbReference type="PDBsum" id="7ZW0"/>
<dbReference type="PDBsum" id="8BN3"/>
<dbReference type="PDBsum" id="8BQD"/>
<dbReference type="PDBsum" id="8BQX"/>
<dbReference type="PDBsum" id="8CAH"/>
<dbReference type="PDBsum" id="8CAS"/>
<dbReference type="PDBsum" id="8CBJ"/>
<dbReference type="PDBsum" id="8CCS"/>
<dbReference type="PDBsum" id="8CDL"/>
<dbReference type="PDBsum" id="8CDR"/>
<dbReference type="PDBsum" id="8K2D"/>
<dbReference type="PDBsum" id="8K82"/>
<dbReference type="PDBsum" id="8P4V"/>
<dbReference type="PDBsum" id="8P9A"/>
<dbReference type="PDBsum" id="8T2X"/>
<dbReference type="PDBsum" id="8T2Y"/>
<dbReference type="PDBsum" id="8T2Z"/>
<dbReference type="PDBsum" id="8T30"/>
<dbReference type="PDBsum" id="8T3A"/>
<dbReference type="PDBsum" id="8T3B"/>
<dbReference type="PDBsum" id="8T3C"/>
<dbReference type="PDBsum" id="8T3D"/>
<dbReference type="PDBsum" id="8T3E"/>
<dbReference type="PDBsum" id="8T3F"/>
<dbReference type="PDBsum" id="8UT0"/>
<dbReference type="PDBsum" id="8UTI"/>
<dbReference type="PDBsum" id="8XU8"/>
<dbReference type="PDBsum" id="8YLD"/>
<dbReference type="PDBsum" id="8YLR"/>
<dbReference type="PDBsum" id="8Z70"/>
<dbReference type="PDBsum" id="8Z71"/>
<dbReference type="PDBsum" id="9F9S"/>
<dbReference type="EMDB" id="EMD-0047"/>
<dbReference type="EMDB" id="EMD-0048"/>
<dbReference type="EMDB" id="EMD-0049"/>
<dbReference type="EMDB" id="EMD-10098"/>
<dbReference type="EMDB" id="EMD-10262"/>
<dbReference type="EMDB" id="EMD-10315"/>
<dbReference type="EMDB" id="EMD-10377"/>
<dbReference type="EMDB" id="EMD-10396"/>
<dbReference type="EMDB" id="EMD-10397"/>
<dbReference type="EMDB" id="EMD-10398"/>
<dbReference type="EMDB" id="EMD-10431"/>
<dbReference type="EMDB" id="EMD-10537"/>
<dbReference type="EMDB" id="EMD-11096"/>
<dbReference type="EMDB" id="EMD-11097"/>
<dbReference type="EMDB" id="EMD-11160"/>
<dbReference type="EMDB" id="EMD-11439"/>
<dbReference type="EMDB" id="EMD-11608"/>
<dbReference type="EMDB" id="EMD-12081"/>
<dbReference type="EMDB" id="EMD-12534"/>
<dbReference type="EMDB" id="EMD-12535"/>
<dbReference type="EMDB" id="EMD-14979"/>
<dbReference type="EMDB" id="EMD-14990"/>
<dbReference type="EMDB" id="EMD-16191"/>
<dbReference type="EMDB" id="EMD-16525"/>
<dbReference type="EMDB" id="EMD-16533"/>
<dbReference type="EMDB" id="EMD-16541"/>
<dbReference type="EMDB" id="EMD-21644"/>
<dbReference type="EMDB" id="EMD-21859"/>
<dbReference type="EMDB" id="EMD-23934"/>
<dbReference type="EMDB" id="EMD-23935"/>
<dbReference type="EMDB" id="EMD-24235"/>
<dbReference type="EMDB" id="EMD-3461"/>
<dbReference type="EMDB" id="EMD-36839"/>
<dbReference type="EMDB" id="EMD-36945"/>
<dbReference type="EMDB" id="EMD-38660"/>
<dbReference type="EMDB" id="EMD-4140"/>
<dbReference type="EMDB" id="EMD-4214"/>
<dbReference type="EMDB" id="EMD-4427"/>
<dbReference type="EMDB" id="EMD-4474"/>
<dbReference type="EMDB" id="EMD-4792"/>
<dbReference type="EMDB" id="EMD-4793"/>
<dbReference type="EMDB" id="EMD-50259"/>
<dbReference type="SMR" id="P05750"/>
<dbReference type="BioGRID" id="35653">
    <property type="interactions" value="974"/>
</dbReference>
<dbReference type="ComplexPortal" id="CPX-1599">
    <property type="entry name" value="40S cytosolic small ribosomal subunit"/>
</dbReference>
<dbReference type="DIP" id="DIP-4328N"/>
<dbReference type="FunCoup" id="P05750">
    <property type="interactions" value="1518"/>
</dbReference>
<dbReference type="IntAct" id="P05750">
    <property type="interactions" value="165"/>
</dbReference>
<dbReference type="MINT" id="P05750"/>
<dbReference type="STRING" id="4932.YNL178W"/>
<dbReference type="CarbonylDB" id="P05750"/>
<dbReference type="iPTMnet" id="P05750"/>
<dbReference type="PaxDb" id="4932-YNL178W"/>
<dbReference type="PeptideAtlas" id="P05750"/>
<dbReference type="EnsemblFungi" id="YNL178W_mRNA">
    <property type="protein sequence ID" value="YNL178W"/>
    <property type="gene ID" value="YNL178W"/>
</dbReference>
<dbReference type="GeneID" id="855543"/>
<dbReference type="KEGG" id="sce:YNL178W"/>
<dbReference type="AGR" id="SGD:S000005122"/>
<dbReference type="SGD" id="S000005122">
    <property type="gene designation" value="RPS3"/>
</dbReference>
<dbReference type="VEuPathDB" id="FungiDB:YNL178W"/>
<dbReference type="eggNOG" id="KOG3181">
    <property type="taxonomic scope" value="Eukaryota"/>
</dbReference>
<dbReference type="GeneTree" id="ENSGT00390000008610"/>
<dbReference type="HOGENOM" id="CLU_058591_2_1_1"/>
<dbReference type="InParanoid" id="P05750"/>
<dbReference type="OMA" id="NKKKWMI"/>
<dbReference type="OrthoDB" id="10248446at2759"/>
<dbReference type="BioCyc" id="YEAST:G3O-33190-MONOMER"/>
<dbReference type="Reactome" id="R-SCE-156827">
    <property type="pathway name" value="L13a-mediated translational silencing of Ceruloplasmin expression"/>
</dbReference>
<dbReference type="Reactome" id="R-SCE-1799339">
    <property type="pathway name" value="SRP-dependent cotranslational protein targeting to membrane"/>
</dbReference>
<dbReference type="Reactome" id="R-SCE-72649">
    <property type="pathway name" value="Translation initiation complex formation"/>
</dbReference>
<dbReference type="Reactome" id="R-SCE-72689">
    <property type="pathway name" value="Formation of a pool of free 40S subunits"/>
</dbReference>
<dbReference type="Reactome" id="R-SCE-72695">
    <property type="pathway name" value="Formation of the ternary complex, and subsequently, the 43S complex"/>
</dbReference>
<dbReference type="Reactome" id="R-SCE-72702">
    <property type="pathway name" value="Ribosomal scanning and start codon recognition"/>
</dbReference>
<dbReference type="Reactome" id="R-SCE-72706">
    <property type="pathway name" value="GTP hydrolysis and joining of the 60S ribosomal subunit"/>
</dbReference>
<dbReference type="Reactome" id="R-SCE-975956">
    <property type="pathway name" value="Nonsense Mediated Decay (NMD) independent of the Exon Junction Complex (EJC)"/>
</dbReference>
<dbReference type="Reactome" id="R-SCE-975957">
    <property type="pathway name" value="Nonsense Mediated Decay (NMD) enhanced by the Exon Junction Complex (EJC)"/>
</dbReference>
<dbReference type="BioGRID-ORCS" id="855543">
    <property type="hits" value="9 hits in 10 CRISPR screens"/>
</dbReference>
<dbReference type="EvolutionaryTrace" id="P05750"/>
<dbReference type="PRO" id="PR:P05750"/>
<dbReference type="Proteomes" id="UP000002311">
    <property type="component" value="Chromosome XIV"/>
</dbReference>
<dbReference type="RNAct" id="P05750">
    <property type="molecule type" value="protein"/>
</dbReference>
<dbReference type="GO" id="GO:0030686">
    <property type="term" value="C:90S preribosome"/>
    <property type="evidence" value="ECO:0007005"/>
    <property type="project" value="SGD"/>
</dbReference>
<dbReference type="GO" id="GO:0005737">
    <property type="term" value="C:cytoplasm"/>
    <property type="evidence" value="ECO:0000314"/>
    <property type="project" value="ComplexPortal"/>
</dbReference>
<dbReference type="GO" id="GO:0005829">
    <property type="term" value="C:cytosol"/>
    <property type="evidence" value="ECO:0000304"/>
    <property type="project" value="Reactome"/>
</dbReference>
<dbReference type="GO" id="GO:0022627">
    <property type="term" value="C:cytosolic small ribosomal subunit"/>
    <property type="evidence" value="ECO:0000314"/>
    <property type="project" value="SGD"/>
</dbReference>
<dbReference type="GO" id="GO:0005634">
    <property type="term" value="C:nucleus"/>
    <property type="evidence" value="ECO:0000318"/>
    <property type="project" value="GO_Central"/>
</dbReference>
<dbReference type="GO" id="GO:0030688">
    <property type="term" value="C:preribosome, small subunit precursor"/>
    <property type="evidence" value="ECO:0000314"/>
    <property type="project" value="SGD"/>
</dbReference>
<dbReference type="GO" id="GO:0003906">
    <property type="term" value="F:DNA-(apurinic or apyrimidinic site) endonuclease activity"/>
    <property type="evidence" value="ECO:0000314"/>
    <property type="project" value="SGD"/>
</dbReference>
<dbReference type="GO" id="GO:0003723">
    <property type="term" value="F:RNA binding"/>
    <property type="evidence" value="ECO:0007669"/>
    <property type="project" value="UniProtKB-KW"/>
</dbReference>
<dbReference type="GO" id="GO:0003735">
    <property type="term" value="F:structural constituent of ribosome"/>
    <property type="evidence" value="ECO:0000314"/>
    <property type="project" value="SGD"/>
</dbReference>
<dbReference type="GO" id="GO:0002181">
    <property type="term" value="P:cytoplasmic translation"/>
    <property type="evidence" value="ECO:0000315"/>
    <property type="project" value="SGD"/>
</dbReference>
<dbReference type="GO" id="GO:1990145">
    <property type="term" value="P:maintenance of translational fidelity"/>
    <property type="evidence" value="ECO:0000315"/>
    <property type="project" value="SGD"/>
</dbReference>
<dbReference type="GO" id="GO:0070651">
    <property type="term" value="P:nonfunctional rRNA decay"/>
    <property type="evidence" value="ECO:0000315"/>
    <property type="project" value="SGD"/>
</dbReference>
<dbReference type="GO" id="GO:0000056">
    <property type="term" value="P:ribosomal small subunit export from nucleus"/>
    <property type="evidence" value="ECO:0000316"/>
    <property type="project" value="SGD"/>
</dbReference>
<dbReference type="GO" id="GO:0000054">
    <property type="term" value="P:ribosomal subunit export from nucleus"/>
    <property type="evidence" value="ECO:0000315"/>
    <property type="project" value="SGD"/>
</dbReference>
<dbReference type="CDD" id="cd02413">
    <property type="entry name" value="KH-II_40S_S3"/>
    <property type="match status" value="1"/>
</dbReference>
<dbReference type="FunFam" id="3.30.1140.32:FF:000013">
    <property type="entry name" value="40S ribosomal protein S3"/>
    <property type="match status" value="1"/>
</dbReference>
<dbReference type="FunFam" id="3.30.300.20:FF:000006">
    <property type="entry name" value="40S ribosomal protein S3"/>
    <property type="match status" value="1"/>
</dbReference>
<dbReference type="Gene3D" id="3.30.300.20">
    <property type="match status" value="1"/>
</dbReference>
<dbReference type="Gene3D" id="3.30.1140.32">
    <property type="entry name" value="Ribosomal protein S3, C-terminal domain"/>
    <property type="match status" value="1"/>
</dbReference>
<dbReference type="InterPro" id="IPR015946">
    <property type="entry name" value="KH_dom-like_a/b"/>
</dbReference>
<dbReference type="InterPro" id="IPR004044">
    <property type="entry name" value="KH_dom_type_2"/>
</dbReference>
<dbReference type="InterPro" id="IPR009019">
    <property type="entry name" value="KH_sf_prok-type"/>
</dbReference>
<dbReference type="InterPro" id="IPR036419">
    <property type="entry name" value="Ribosomal_S3_C_sf"/>
</dbReference>
<dbReference type="InterPro" id="IPR001351">
    <property type="entry name" value="Ribosomal_uS3_C"/>
</dbReference>
<dbReference type="InterPro" id="IPR018280">
    <property type="entry name" value="Ribosomal_uS3_CS"/>
</dbReference>
<dbReference type="InterPro" id="IPR005703">
    <property type="entry name" value="Ribosomal_uS3_euk/arc"/>
</dbReference>
<dbReference type="NCBIfam" id="NF003219">
    <property type="entry name" value="PRK04191.1"/>
    <property type="match status" value="1"/>
</dbReference>
<dbReference type="NCBIfam" id="TIGR01008">
    <property type="entry name" value="uS3_euk_arch"/>
    <property type="match status" value="1"/>
</dbReference>
<dbReference type="PANTHER" id="PTHR11760">
    <property type="entry name" value="30S/40S RIBOSOMAL PROTEIN S3"/>
    <property type="match status" value="1"/>
</dbReference>
<dbReference type="PANTHER" id="PTHR11760:SF32">
    <property type="entry name" value="SMALL RIBOSOMAL SUBUNIT PROTEIN US3"/>
    <property type="match status" value="1"/>
</dbReference>
<dbReference type="Pfam" id="PF07650">
    <property type="entry name" value="KH_2"/>
    <property type="match status" value="1"/>
</dbReference>
<dbReference type="Pfam" id="PF00189">
    <property type="entry name" value="Ribosomal_S3_C"/>
    <property type="match status" value="1"/>
</dbReference>
<dbReference type="SUPFAM" id="SSF54814">
    <property type="entry name" value="Prokaryotic type KH domain (KH-domain type II)"/>
    <property type="match status" value="1"/>
</dbReference>
<dbReference type="SUPFAM" id="SSF54821">
    <property type="entry name" value="Ribosomal protein S3 C-terminal domain"/>
    <property type="match status" value="1"/>
</dbReference>
<dbReference type="PROSITE" id="PS50823">
    <property type="entry name" value="KH_TYPE_2"/>
    <property type="match status" value="1"/>
</dbReference>
<dbReference type="PROSITE" id="PS00548">
    <property type="entry name" value="RIBOSOMAL_S3"/>
    <property type="match status" value="1"/>
</dbReference>
<comment type="function">
    <text evidence="18">Component of the ribosome, a large ribonucleoprotein complex responsible for the synthesis of proteins in the cell. The small ribosomal subunit (SSU) binds messenger RNAs (mRNAs) and translates the encoded message by selecting cognate aminoacyl-transfer RNA (tRNA) molecules. The large subunit (LSU) contains the ribosomal catalytic site termed the peptidyl transferase center (PTC), which catalyzes the formation of peptide bonds, thereby polymerizing the amino acids delivered by tRNAs into a polypeptide chain. The nascent polypeptides leave the ribosome through a tunnel in the LSU and interact with protein factors that function in enzymatic processing, targeting, and the membrane insertion of nascent chains at the exit of the ribosomal tunnel.</text>
</comment>
<comment type="subunit">
    <text evidence="7 19">Component of the small ribosomal subunit (SSU). Mature yeast ribosomes consist of a small (40S) and a large (60S) subunit. The 40S small subunit contains 1 molecule of ribosomal RNA (18S rRNA) and 33 different proteins (encoded by 57 genes). The large 60S subunit contains 3 rRNA molecules (25S, 5.8S and 5S rRNA) and 46 different proteins (encoded by 81 genes) (PubMed:22096102, PubMed:9559554).</text>
</comment>
<comment type="interaction">
    <interactant intactId="EBI-16140">
        <id>P05750</id>
    </interactant>
    <interactant intactId="EBI-10248">
        <id>P34078</id>
        <label>LTV1</label>
    </interactant>
    <organismsDiffer>false</organismsDiffer>
    <experiments>2</experiments>
</comment>
<comment type="interaction">
    <interactant intactId="EBI-16140">
        <id>P05750</id>
    </interactant>
    <interactant intactId="EBI-29124">
        <id>P40160</id>
        <label>RIO2</label>
    </interactant>
    <organismsDiffer>false</organismsDiffer>
    <experiments>3</experiments>
</comment>
<comment type="interaction">
    <interactant intactId="EBI-16140">
        <id>P05750</id>
    </interactant>
    <interactant intactId="EBI-20829">
        <id>P46683</id>
        <label>YAR1</label>
    </interactant>
    <organismsDiffer>false</organismsDiffer>
    <experiments>3</experiments>
</comment>
<comment type="subcellular location">
    <subcellularLocation>
        <location evidence="7">Cytoplasm</location>
    </subcellularLocation>
</comment>
<comment type="PTM">
    <text evidence="9 10 12 13 14">Ubiquitinated at Lys-212 in response to stalled ribosomes (PubMed:28757607, PubMed:28943311, PubMed:30718516, PubMed:30893611, PubMed:31819057). Ubiquitination leads to activation of the No-Go Decay (NGD) pathway and degradation of non-functional 18S rRNA: first monoubiquitinated at Lys-212 by MAG2, followed by formation of 'Lys-63'-linked polyubiquitin chains on monoubiquitin by HEL2 and RSP5 (PubMed:30893611).</text>
</comment>
<comment type="mass spectrometry">
    <text>The measured mass is that of the monomethylated protein.</text>
</comment>
<comment type="miscellaneous">
    <text evidence="4">Present with 146000 molecules/cell in log phase SD medium.</text>
</comment>
<comment type="similarity">
    <text evidence="17">Belongs to the universal ribosomal protein uS3 family.</text>
</comment>
<name>RS3_YEAST</name>
<keyword id="KW-0002">3D-structure</keyword>
<keyword id="KW-0963">Cytoplasm</keyword>
<keyword id="KW-0903">Direct protein sequencing</keyword>
<keyword id="KW-1017">Isopeptide bond</keyword>
<keyword id="KW-0488">Methylation</keyword>
<keyword id="KW-0597">Phosphoprotein</keyword>
<keyword id="KW-1185">Reference proteome</keyword>
<keyword id="KW-0687">Ribonucleoprotein</keyword>
<keyword id="KW-0689">Ribosomal protein</keyword>
<keyword id="KW-0694">RNA-binding</keyword>
<keyword id="KW-0832">Ubl conjugation</keyword>
<protein>
    <recommendedName>
        <fullName evidence="15">Small ribosomal subunit protein uS3</fullName>
    </recommendedName>
    <alternativeName>
        <fullName evidence="16">40S ribosomal protein S3</fullName>
    </alternativeName>
    <alternativeName>
        <fullName evidence="16">RP13</fullName>
    </alternativeName>
    <alternativeName>
        <fullName evidence="16">YS3</fullName>
    </alternativeName>
</protein>
<feature type="initiator methionine" description="Removed" evidence="3 5 6">
    <location>
        <position position="1"/>
    </location>
</feature>
<feature type="chain" id="PRO_0000130332" description="Small ribosomal subunit protein uS3">
    <location>
        <begin position="2"/>
        <end position="240"/>
    </location>
</feature>
<feature type="domain" description="KH type-2" evidence="1">
    <location>
        <begin position="21"/>
        <end position="92"/>
    </location>
</feature>
<feature type="region of interest" description="Disordered" evidence="2">
    <location>
        <begin position="212"/>
        <end position="240"/>
    </location>
</feature>
<feature type="compositionally biased region" description="Acidic residues" evidence="2">
    <location>
        <begin position="230"/>
        <end position="240"/>
    </location>
</feature>
<feature type="modified residue" description="Phosphothreonine" evidence="23">
    <location>
        <position position="44"/>
    </location>
</feature>
<feature type="modified residue" description="Phosphothreonine" evidence="21">
    <location>
        <position position="70"/>
    </location>
</feature>
<feature type="modified residue" description="Phosphoserine" evidence="23">
    <location>
        <position position="97"/>
    </location>
</feature>
<feature type="modified residue" description="Phosphoserine" evidence="21">
    <location>
        <position position="129"/>
    </location>
</feature>
<feature type="modified residue" description="Omega-N-methylarginine; by SFM1" evidence="8">
    <location>
        <position position="146"/>
    </location>
</feature>
<feature type="modified residue" description="Phosphoserine" evidence="21 22 23 24">
    <location>
        <position position="221"/>
    </location>
</feature>
<feature type="modified residue" description="Phosphothreonine" evidence="24">
    <location>
        <position position="231"/>
    </location>
</feature>
<feature type="cross-link" description="Glycyl lysine isopeptide (Lys-Gly) (interchain with G-Cter in ubiquitin)" evidence="25">
    <location>
        <position position="106"/>
    </location>
</feature>
<feature type="cross-link" description="Glycyl lysine isopeptide (Lys-Gly) (interchain with G-Cter in ubiquitin)" evidence="25">
    <location>
        <position position="132"/>
    </location>
</feature>
<feature type="cross-link" description="Glycyl lysine isopeptide (Lys-Gly) (interchain with G-Cter in ubiquitin)" evidence="25">
    <location>
        <position position="141"/>
    </location>
</feature>
<feature type="cross-link" description="Glycyl lysine isopeptide (Lys-Gly) (interchain with G-Cter in ubiquitin)" evidence="25">
    <location>
        <position position="151"/>
    </location>
</feature>
<feature type="cross-link" description="Glycyl lysine isopeptide (Lys-Gly) (interchain with G-Cter in ubiquitin)" evidence="25">
    <location>
        <position position="200"/>
    </location>
</feature>
<feature type="cross-link" description="Glycyl lysine isopeptide (Lys-Gly) (interchain with G-Cter in ubiquitin)" evidence="9 12 13 14 25">
    <location>
        <position position="212"/>
    </location>
</feature>
<feature type="mutagenesis site" description="Impaired ability to rescue stalled ribosomes." evidence="11">
    <original>K</original>
    <variation>E</variation>
    <location>
        <position position="108"/>
    </location>
</feature>
<feature type="mutagenesis site" description="Abolishes ubiquitination by HEL2." evidence="9">
    <original>K</original>
    <variation>R</variation>
    <location>
        <position position="212"/>
    </location>
</feature>
<feature type="sequence conflict" description="In Ref. 3; AAA35010." evidence="17" ref="3">
    <original>F</original>
    <variation>N</variation>
    <location>
        <position position="17"/>
    </location>
</feature>
<feature type="sequence conflict" description="In Ref. 3; AAA35010." evidence="17" ref="3">
    <original>KD</original>
    <variation>NH</variation>
    <location>
        <begin position="223"/>
        <end position="224"/>
    </location>
</feature>
<feature type="helix" evidence="26">
    <location>
        <begin position="15"/>
        <end position="28"/>
    </location>
</feature>
<feature type="turn" evidence="26">
    <location>
        <begin position="29"/>
        <end position="33"/>
    </location>
</feature>
<feature type="strand" evidence="26">
    <location>
        <begin position="34"/>
        <end position="42"/>
    </location>
</feature>
<feature type="strand" evidence="26">
    <location>
        <begin position="45"/>
        <end position="53"/>
    </location>
</feature>
<feature type="helix" evidence="26">
    <location>
        <begin position="55"/>
        <end position="59"/>
    </location>
</feature>
<feature type="helix" evidence="28">
    <location>
        <begin position="61"/>
        <end position="63"/>
    </location>
</feature>
<feature type="helix" evidence="26">
    <location>
        <begin position="64"/>
        <end position="77"/>
    </location>
</feature>
<feature type="strand" evidence="26">
    <location>
        <begin position="83"/>
        <end position="90"/>
    </location>
</feature>
<feature type="helix" evidence="26">
    <location>
        <begin position="94"/>
        <end position="96"/>
    </location>
</feature>
<feature type="helix" evidence="26">
    <location>
        <begin position="98"/>
        <end position="110"/>
    </location>
</feature>
<feature type="helix" evidence="26">
    <location>
        <begin position="115"/>
        <end position="128"/>
    </location>
</feature>
<feature type="strand" evidence="26">
    <location>
        <begin position="134"/>
        <end position="141"/>
    </location>
</feature>
<feature type="strand" evidence="28">
    <location>
        <begin position="142"/>
        <end position="146"/>
    </location>
</feature>
<feature type="strand" evidence="26">
    <location>
        <begin position="152"/>
        <end position="159"/>
    </location>
</feature>
<feature type="strand" evidence="27">
    <location>
        <begin position="160"/>
        <end position="162"/>
    </location>
</feature>
<feature type="helix" evidence="26">
    <location>
        <begin position="163"/>
        <end position="167"/>
    </location>
</feature>
<feature type="strand" evidence="26">
    <location>
        <begin position="168"/>
        <end position="176"/>
    </location>
</feature>
<feature type="strand" evidence="26">
    <location>
        <begin position="181"/>
        <end position="189"/>
    </location>
</feature>
<feature type="helix" evidence="26">
    <location>
        <begin position="192"/>
        <end position="194"/>
    </location>
</feature>
<feature type="strand" evidence="29">
    <location>
        <begin position="206"/>
        <end position="208"/>
    </location>
</feature>
<feature type="strand" evidence="28">
    <location>
        <begin position="221"/>
        <end position="224"/>
    </location>
</feature>
<sequence>MVALISKKRKLVADGVFYAELNEFFTRELAEEGYSGVEVRVTPTKTEVIIRATRTQDVLGENGRRINELTLLVQKRFKYAPGTIVLYAERVQDRGLSAVAQAESMKFKLLNGLAIRRAAYGVVRYVMESGAKGCEVVVSGKLRAARAKAMKFADGFLIHSGQPVNDFIDTATRHVLMRQGVLGIKVKIMRDPAKSRTGPKALPDAVTIIEPKEEEPILAPSVKDYRPAEETEAQAEPVEA</sequence>
<evidence type="ECO:0000255" key="1">
    <source>
        <dbReference type="PROSITE-ProRule" id="PRU00118"/>
    </source>
</evidence>
<evidence type="ECO:0000256" key="2">
    <source>
        <dbReference type="SAM" id="MobiDB-lite"/>
    </source>
</evidence>
<evidence type="ECO:0000269" key="3">
    <source>
    </source>
</evidence>
<evidence type="ECO:0000269" key="4">
    <source>
    </source>
</evidence>
<evidence type="ECO:0000269" key="5">
    <source>
    </source>
</evidence>
<evidence type="ECO:0000269" key="6">
    <source>
    </source>
</evidence>
<evidence type="ECO:0000269" key="7">
    <source>
    </source>
</evidence>
<evidence type="ECO:0000269" key="8">
    <source>
    </source>
</evidence>
<evidence type="ECO:0000269" key="9">
    <source>
    </source>
</evidence>
<evidence type="ECO:0000269" key="10">
    <source>
    </source>
</evidence>
<evidence type="ECO:0000269" key="11">
    <source>
    </source>
</evidence>
<evidence type="ECO:0000269" key="12">
    <source>
    </source>
</evidence>
<evidence type="ECO:0000269" key="13">
    <source>
    </source>
</evidence>
<evidence type="ECO:0000269" key="14">
    <source>
    </source>
</evidence>
<evidence type="ECO:0000303" key="15">
    <source>
    </source>
</evidence>
<evidence type="ECO:0000303" key="16">
    <source>
    </source>
</evidence>
<evidence type="ECO:0000305" key="17"/>
<evidence type="ECO:0000305" key="18">
    <source>
    </source>
</evidence>
<evidence type="ECO:0000305" key="19">
    <source>
    </source>
</evidence>
<evidence type="ECO:0000312" key="20">
    <source>
        <dbReference type="SGD" id="S000005122"/>
    </source>
</evidence>
<evidence type="ECO:0007744" key="21">
    <source>
    </source>
</evidence>
<evidence type="ECO:0007744" key="22">
    <source>
    </source>
</evidence>
<evidence type="ECO:0007744" key="23">
    <source>
    </source>
</evidence>
<evidence type="ECO:0007744" key="24">
    <source>
    </source>
</evidence>
<evidence type="ECO:0007744" key="25">
    <source>
    </source>
</evidence>
<evidence type="ECO:0007829" key="26">
    <source>
        <dbReference type="PDB" id="4BSZ"/>
    </source>
</evidence>
<evidence type="ECO:0007829" key="27">
    <source>
        <dbReference type="PDB" id="6FAI"/>
    </source>
</evidence>
<evidence type="ECO:0007829" key="28">
    <source>
        <dbReference type="PDB" id="6ZVI"/>
    </source>
</evidence>
<evidence type="ECO:0007829" key="29">
    <source>
        <dbReference type="PDB" id="8CAS"/>
    </source>
</evidence>
<gene>
    <name evidence="16" type="primary">RPS3</name>
    <name type="synonym">SUF14</name>
    <name evidence="20" type="ordered locus">YNL178W</name>
    <name type="ORF">N1653</name>
</gene>